<organism>
    <name type="scientific">Aliarcobacter butzleri (strain RM4018)</name>
    <name type="common">Arcobacter butzleri</name>
    <dbReference type="NCBI Taxonomy" id="367737"/>
    <lineage>
        <taxon>Bacteria</taxon>
        <taxon>Pseudomonadati</taxon>
        <taxon>Campylobacterota</taxon>
        <taxon>Epsilonproteobacteria</taxon>
        <taxon>Campylobacterales</taxon>
        <taxon>Arcobacteraceae</taxon>
        <taxon>Aliarcobacter</taxon>
    </lineage>
</organism>
<proteinExistence type="inferred from homology"/>
<dbReference type="EC" id="6.1.1.14" evidence="1"/>
<dbReference type="EMBL" id="CP000361">
    <property type="protein sequence ID" value="ABV68201.1"/>
    <property type="molecule type" value="Genomic_DNA"/>
</dbReference>
<dbReference type="RefSeq" id="WP_012147877.1">
    <property type="nucleotide sequence ID" value="NC_009850.1"/>
</dbReference>
<dbReference type="SMR" id="A8EW78"/>
<dbReference type="STRING" id="367737.Abu_1979"/>
<dbReference type="GeneID" id="24304517"/>
<dbReference type="KEGG" id="abu:Abu_1979"/>
<dbReference type="eggNOG" id="COG0752">
    <property type="taxonomic scope" value="Bacteria"/>
</dbReference>
<dbReference type="HOGENOM" id="CLU_057066_1_0_7"/>
<dbReference type="Proteomes" id="UP000001136">
    <property type="component" value="Chromosome"/>
</dbReference>
<dbReference type="GO" id="GO:0005829">
    <property type="term" value="C:cytosol"/>
    <property type="evidence" value="ECO:0007669"/>
    <property type="project" value="TreeGrafter"/>
</dbReference>
<dbReference type="GO" id="GO:0005524">
    <property type="term" value="F:ATP binding"/>
    <property type="evidence" value="ECO:0007669"/>
    <property type="project" value="UniProtKB-UniRule"/>
</dbReference>
<dbReference type="GO" id="GO:0004820">
    <property type="term" value="F:glycine-tRNA ligase activity"/>
    <property type="evidence" value="ECO:0007669"/>
    <property type="project" value="UniProtKB-UniRule"/>
</dbReference>
<dbReference type="GO" id="GO:0006426">
    <property type="term" value="P:glycyl-tRNA aminoacylation"/>
    <property type="evidence" value="ECO:0007669"/>
    <property type="project" value="UniProtKB-UniRule"/>
</dbReference>
<dbReference type="CDD" id="cd00733">
    <property type="entry name" value="GlyRS_alpha_core"/>
    <property type="match status" value="1"/>
</dbReference>
<dbReference type="FunFam" id="3.30.930.10:FF:000006">
    <property type="entry name" value="Glycine--tRNA ligase alpha subunit"/>
    <property type="match status" value="1"/>
</dbReference>
<dbReference type="Gene3D" id="3.30.930.10">
    <property type="entry name" value="Bira Bifunctional Protein, Domain 2"/>
    <property type="match status" value="1"/>
</dbReference>
<dbReference type="Gene3D" id="1.20.58.180">
    <property type="entry name" value="Class II aaRS and biotin synthetases, domain 2"/>
    <property type="match status" value="1"/>
</dbReference>
<dbReference type="HAMAP" id="MF_00254">
    <property type="entry name" value="Gly_tRNA_synth_alpha"/>
    <property type="match status" value="1"/>
</dbReference>
<dbReference type="InterPro" id="IPR045864">
    <property type="entry name" value="aa-tRNA-synth_II/BPL/LPL"/>
</dbReference>
<dbReference type="InterPro" id="IPR006194">
    <property type="entry name" value="Gly-tRNA-synth_heterodimer"/>
</dbReference>
<dbReference type="InterPro" id="IPR002310">
    <property type="entry name" value="Gly-tRNA_ligase_asu"/>
</dbReference>
<dbReference type="NCBIfam" id="TIGR00388">
    <property type="entry name" value="glyQ"/>
    <property type="match status" value="1"/>
</dbReference>
<dbReference type="NCBIfam" id="NF006827">
    <property type="entry name" value="PRK09348.1"/>
    <property type="match status" value="1"/>
</dbReference>
<dbReference type="PANTHER" id="PTHR30075:SF2">
    <property type="entry name" value="GLYCINE--TRNA LIGASE, CHLOROPLASTIC_MITOCHONDRIAL 2"/>
    <property type="match status" value="1"/>
</dbReference>
<dbReference type="PANTHER" id="PTHR30075">
    <property type="entry name" value="GLYCYL-TRNA SYNTHETASE"/>
    <property type="match status" value="1"/>
</dbReference>
<dbReference type="Pfam" id="PF02091">
    <property type="entry name" value="tRNA-synt_2e"/>
    <property type="match status" value="1"/>
</dbReference>
<dbReference type="PRINTS" id="PR01044">
    <property type="entry name" value="TRNASYNTHGA"/>
</dbReference>
<dbReference type="SUPFAM" id="SSF55681">
    <property type="entry name" value="Class II aaRS and biotin synthetases"/>
    <property type="match status" value="1"/>
</dbReference>
<dbReference type="PROSITE" id="PS50861">
    <property type="entry name" value="AA_TRNA_LIGASE_II_GLYAB"/>
    <property type="match status" value="1"/>
</dbReference>
<evidence type="ECO:0000255" key="1">
    <source>
        <dbReference type="HAMAP-Rule" id="MF_00254"/>
    </source>
</evidence>
<sequence length="293" mass="33400">MITFSQMLLKLQEFWAKQGCNIVQPYDIPAGAGTFHPATLLRSLDSTPWSTAYVAPSRRPTDGRYGENPNRLGAYYQFQVLIKPSPDNIQDLYLQSLEFLGLDVSKHDIRFVEDNWESPTLGAWGLGWEVWLDGMEVTQFTYFQQVGGLPCSPVAVEITYGTERLAMYLQGVDSVFDIVWNENEFGKTTYADVHKEGEYEFSKYNFEIANTEMLFRHFDDAFNECKSCLGAGLPLPAYDQCMIASHAFNTLDARKAISVTERQNYILKVRELAQGCAVLYKEQESDRLKRVGR</sequence>
<feature type="chain" id="PRO_1000059049" description="Glycine--tRNA ligase alpha subunit">
    <location>
        <begin position="1"/>
        <end position="293"/>
    </location>
</feature>
<reference key="1">
    <citation type="journal article" date="2007" name="PLoS ONE">
        <title>The complete genome sequence and analysis of the Epsilonproteobacterium Arcobacter butzleri.</title>
        <authorList>
            <person name="Miller W.G."/>
            <person name="Parker C.T."/>
            <person name="Rubenfield M."/>
            <person name="Mendz G.L."/>
            <person name="Woesten M.M.S.M."/>
            <person name="Ussery D.W."/>
            <person name="Stolz J.F."/>
            <person name="Binnewies T.T."/>
            <person name="Hallin P.F."/>
            <person name="Wang G."/>
            <person name="Malek J.A."/>
            <person name="Rogosin A."/>
            <person name="Stanker L.H."/>
            <person name="Mandrell R.E."/>
        </authorList>
    </citation>
    <scope>NUCLEOTIDE SEQUENCE [LARGE SCALE GENOMIC DNA]</scope>
    <source>
        <strain>RM4018</strain>
    </source>
</reference>
<keyword id="KW-0030">Aminoacyl-tRNA synthetase</keyword>
<keyword id="KW-0067">ATP-binding</keyword>
<keyword id="KW-0963">Cytoplasm</keyword>
<keyword id="KW-0436">Ligase</keyword>
<keyword id="KW-0547">Nucleotide-binding</keyword>
<keyword id="KW-0648">Protein biosynthesis</keyword>
<keyword id="KW-1185">Reference proteome</keyword>
<protein>
    <recommendedName>
        <fullName evidence="1">Glycine--tRNA ligase alpha subunit</fullName>
        <ecNumber evidence="1">6.1.1.14</ecNumber>
    </recommendedName>
    <alternativeName>
        <fullName evidence="1">Glycyl-tRNA synthetase alpha subunit</fullName>
        <shortName evidence="1">GlyRS</shortName>
    </alternativeName>
</protein>
<name>SYGA_ALIB4</name>
<accession>A8EW78</accession>
<gene>
    <name evidence="1" type="primary">glyQ</name>
    <name type="ordered locus">Abu_1979</name>
</gene>
<comment type="catalytic activity">
    <reaction evidence="1">
        <text>tRNA(Gly) + glycine + ATP = glycyl-tRNA(Gly) + AMP + diphosphate</text>
        <dbReference type="Rhea" id="RHEA:16013"/>
        <dbReference type="Rhea" id="RHEA-COMP:9664"/>
        <dbReference type="Rhea" id="RHEA-COMP:9683"/>
        <dbReference type="ChEBI" id="CHEBI:30616"/>
        <dbReference type="ChEBI" id="CHEBI:33019"/>
        <dbReference type="ChEBI" id="CHEBI:57305"/>
        <dbReference type="ChEBI" id="CHEBI:78442"/>
        <dbReference type="ChEBI" id="CHEBI:78522"/>
        <dbReference type="ChEBI" id="CHEBI:456215"/>
        <dbReference type="EC" id="6.1.1.14"/>
    </reaction>
</comment>
<comment type="subunit">
    <text evidence="1">Tetramer of two alpha and two beta subunits.</text>
</comment>
<comment type="subcellular location">
    <subcellularLocation>
        <location evidence="1">Cytoplasm</location>
    </subcellularLocation>
</comment>
<comment type="similarity">
    <text evidence="1">Belongs to the class-II aminoacyl-tRNA synthetase family.</text>
</comment>